<keyword id="KW-0028">Amino-acid biosynthesis</keyword>
<keyword id="KW-0378">Hydrolase</keyword>
<keyword id="KW-0486">Methionine biosynthesis</keyword>
<organism>
    <name type="scientific">Shewanella baltica (strain OS185)</name>
    <dbReference type="NCBI Taxonomy" id="402882"/>
    <lineage>
        <taxon>Bacteria</taxon>
        <taxon>Pseudomonadati</taxon>
        <taxon>Pseudomonadota</taxon>
        <taxon>Gammaproteobacteria</taxon>
        <taxon>Alteromonadales</taxon>
        <taxon>Shewanellaceae</taxon>
        <taxon>Shewanella</taxon>
    </lineage>
</organism>
<accession>A6WKN2</accession>
<reference key="1">
    <citation type="submission" date="2007-07" db="EMBL/GenBank/DDBJ databases">
        <title>Complete sequence of chromosome of Shewanella baltica OS185.</title>
        <authorList>
            <consortium name="US DOE Joint Genome Institute"/>
            <person name="Copeland A."/>
            <person name="Lucas S."/>
            <person name="Lapidus A."/>
            <person name="Barry K."/>
            <person name="Glavina del Rio T."/>
            <person name="Dalin E."/>
            <person name="Tice H."/>
            <person name="Pitluck S."/>
            <person name="Sims D."/>
            <person name="Brettin T."/>
            <person name="Bruce D."/>
            <person name="Detter J.C."/>
            <person name="Han C."/>
            <person name="Schmutz J."/>
            <person name="Larimer F."/>
            <person name="Land M."/>
            <person name="Hauser L."/>
            <person name="Kyrpides N."/>
            <person name="Mikhailova N."/>
            <person name="Brettar I."/>
            <person name="Rodrigues J."/>
            <person name="Konstantinidis K."/>
            <person name="Tiedje J."/>
            <person name="Richardson P."/>
        </authorList>
    </citation>
    <scope>NUCLEOTIDE SEQUENCE [LARGE SCALE GENOMIC DNA]</scope>
    <source>
        <strain>OS185</strain>
    </source>
</reference>
<evidence type="ECO:0000255" key="1">
    <source>
        <dbReference type="HAMAP-Rule" id="MF_01684"/>
    </source>
</evidence>
<proteinExistence type="inferred from homology"/>
<protein>
    <recommendedName>
        <fullName evidence="1">5'-methylthioadenosine/S-adenosylhomocysteine nucleosidase</fullName>
        <shortName evidence="1">MTA/SAH nucleosidase</shortName>
        <shortName evidence="1">MTAN</shortName>
        <ecNumber evidence="1">3.2.2.9</ecNumber>
    </recommendedName>
    <alternativeName>
        <fullName evidence="1">5'-deoxyadenosine nucleosidase</fullName>
        <shortName evidence="1">DOA nucleosidase</shortName>
        <shortName evidence="1">dAdo nucleosidase</shortName>
    </alternativeName>
    <alternativeName>
        <fullName evidence="1">5'-methylthioadenosine nucleosidase</fullName>
        <shortName evidence="1">MTA nucleosidase</shortName>
    </alternativeName>
    <alternativeName>
        <fullName evidence="1">S-adenosylhomocysteine nucleosidase</fullName>
        <shortName evidence="1">AdoHcy nucleosidase</shortName>
        <shortName evidence="1">SAH nucleosidase</shortName>
        <shortName evidence="1">SRH nucleosidase</shortName>
    </alternativeName>
</protein>
<name>MTNN_SHEB8</name>
<comment type="function">
    <text evidence="1">Catalyzes the irreversible cleavage of the glycosidic bond in both 5'-methylthioadenosine (MTA) and S-adenosylhomocysteine (SAH/AdoHcy) to adenine and the corresponding thioribose, 5'-methylthioribose and S-ribosylhomocysteine, respectively. Also cleaves 5'-deoxyadenosine, a toxic by-product of radical S-adenosylmethionine (SAM) enzymes, into 5-deoxyribose and adenine.</text>
</comment>
<comment type="catalytic activity">
    <reaction evidence="1">
        <text>S-adenosyl-L-homocysteine + H2O = S-(5-deoxy-D-ribos-5-yl)-L-homocysteine + adenine</text>
        <dbReference type="Rhea" id="RHEA:17805"/>
        <dbReference type="ChEBI" id="CHEBI:15377"/>
        <dbReference type="ChEBI" id="CHEBI:16708"/>
        <dbReference type="ChEBI" id="CHEBI:57856"/>
        <dbReference type="ChEBI" id="CHEBI:58195"/>
        <dbReference type="EC" id="3.2.2.9"/>
    </reaction>
</comment>
<comment type="catalytic activity">
    <reaction evidence="1">
        <text>S-methyl-5'-thioadenosine + H2O = 5-(methylsulfanyl)-D-ribose + adenine</text>
        <dbReference type="Rhea" id="RHEA:13617"/>
        <dbReference type="ChEBI" id="CHEBI:15377"/>
        <dbReference type="ChEBI" id="CHEBI:16708"/>
        <dbReference type="ChEBI" id="CHEBI:17509"/>
        <dbReference type="ChEBI" id="CHEBI:78440"/>
        <dbReference type="EC" id="3.2.2.9"/>
    </reaction>
</comment>
<comment type="catalytic activity">
    <reaction evidence="1">
        <text>5'-deoxyadenosine + H2O = 5-deoxy-D-ribose + adenine</text>
        <dbReference type="Rhea" id="RHEA:29859"/>
        <dbReference type="ChEBI" id="CHEBI:15377"/>
        <dbReference type="ChEBI" id="CHEBI:16708"/>
        <dbReference type="ChEBI" id="CHEBI:17319"/>
        <dbReference type="ChEBI" id="CHEBI:149540"/>
        <dbReference type="EC" id="3.2.2.9"/>
    </reaction>
    <physiologicalReaction direction="left-to-right" evidence="1">
        <dbReference type="Rhea" id="RHEA:29860"/>
    </physiologicalReaction>
</comment>
<comment type="pathway">
    <text evidence="1">Amino-acid biosynthesis; L-methionine biosynthesis via salvage pathway; S-methyl-5-thio-alpha-D-ribose 1-phosphate from S-methyl-5'-thioadenosine (hydrolase route): step 1/2.</text>
</comment>
<comment type="similarity">
    <text evidence="1">Belongs to the PNP/UDP phosphorylase family. MtnN subfamily.</text>
</comment>
<gene>
    <name evidence="1" type="primary">mtnN</name>
    <name type="ordered locus">Shew185_1220</name>
</gene>
<sequence length="236" mass="24644">MKIGIIGAMEPEVAHLIAAMTNATSQTIAGIEFIAGTLAGKDVVVTRSGIGKVAASIATTLLIEKYAPDAVINTGSAGGFVDTLAIGDIVISSEVRHHDVDVTAFGYEIGQMAQQPAAFVPAAHLVEAANKAIAQLGEVKAIEGLICTGDSFICDPIRTQAMLKNFPTMAACEMEGAAIAQVCHQFGVPFVVIRSLSDNANNDSPVDFDSYIVKAGYHSALMVMLLLEQLNPSAIK</sequence>
<dbReference type="EC" id="3.2.2.9" evidence="1"/>
<dbReference type="EMBL" id="CP000753">
    <property type="protein sequence ID" value="ABS07371.1"/>
    <property type="molecule type" value="Genomic_DNA"/>
</dbReference>
<dbReference type="RefSeq" id="WP_012088592.1">
    <property type="nucleotide sequence ID" value="NC_009665.1"/>
</dbReference>
<dbReference type="SMR" id="A6WKN2"/>
<dbReference type="KEGG" id="sbm:Shew185_1220"/>
<dbReference type="HOGENOM" id="CLU_031248_2_2_6"/>
<dbReference type="UniPathway" id="UPA00904">
    <property type="reaction ID" value="UER00871"/>
</dbReference>
<dbReference type="GO" id="GO:0005829">
    <property type="term" value="C:cytosol"/>
    <property type="evidence" value="ECO:0007669"/>
    <property type="project" value="TreeGrafter"/>
</dbReference>
<dbReference type="GO" id="GO:0008782">
    <property type="term" value="F:adenosylhomocysteine nucleosidase activity"/>
    <property type="evidence" value="ECO:0007669"/>
    <property type="project" value="UniProtKB-UniRule"/>
</dbReference>
<dbReference type="GO" id="GO:0008930">
    <property type="term" value="F:methylthioadenosine nucleosidase activity"/>
    <property type="evidence" value="ECO:0007669"/>
    <property type="project" value="UniProtKB-UniRule"/>
</dbReference>
<dbReference type="GO" id="GO:0019509">
    <property type="term" value="P:L-methionine salvage from methylthioadenosine"/>
    <property type="evidence" value="ECO:0007669"/>
    <property type="project" value="UniProtKB-UniRule"/>
</dbReference>
<dbReference type="GO" id="GO:0019284">
    <property type="term" value="P:L-methionine salvage from S-adenosylmethionine"/>
    <property type="evidence" value="ECO:0007669"/>
    <property type="project" value="TreeGrafter"/>
</dbReference>
<dbReference type="GO" id="GO:0009164">
    <property type="term" value="P:nucleoside catabolic process"/>
    <property type="evidence" value="ECO:0007669"/>
    <property type="project" value="InterPro"/>
</dbReference>
<dbReference type="CDD" id="cd09008">
    <property type="entry name" value="MTAN"/>
    <property type="match status" value="1"/>
</dbReference>
<dbReference type="FunFam" id="3.40.50.1580:FF:000001">
    <property type="entry name" value="MTA/SAH nucleosidase family protein"/>
    <property type="match status" value="1"/>
</dbReference>
<dbReference type="Gene3D" id="3.40.50.1580">
    <property type="entry name" value="Nucleoside phosphorylase domain"/>
    <property type="match status" value="1"/>
</dbReference>
<dbReference type="HAMAP" id="MF_01684">
    <property type="entry name" value="Salvage_MtnN"/>
    <property type="match status" value="1"/>
</dbReference>
<dbReference type="InterPro" id="IPR010049">
    <property type="entry name" value="MTA_SAH_Nsdase"/>
</dbReference>
<dbReference type="InterPro" id="IPR000845">
    <property type="entry name" value="Nucleoside_phosphorylase_d"/>
</dbReference>
<dbReference type="InterPro" id="IPR035994">
    <property type="entry name" value="Nucleoside_phosphorylase_sf"/>
</dbReference>
<dbReference type="NCBIfam" id="TIGR01704">
    <property type="entry name" value="MTA_SAH-Nsdase"/>
    <property type="match status" value="1"/>
</dbReference>
<dbReference type="NCBIfam" id="NF004079">
    <property type="entry name" value="PRK05584.1"/>
    <property type="match status" value="1"/>
</dbReference>
<dbReference type="PANTHER" id="PTHR46832">
    <property type="entry name" value="5'-METHYLTHIOADENOSINE/S-ADENOSYLHOMOCYSTEINE NUCLEOSIDASE"/>
    <property type="match status" value="1"/>
</dbReference>
<dbReference type="PANTHER" id="PTHR46832:SF1">
    <property type="entry name" value="5'-METHYLTHIOADENOSINE_S-ADENOSYLHOMOCYSTEINE NUCLEOSIDASE"/>
    <property type="match status" value="1"/>
</dbReference>
<dbReference type="Pfam" id="PF01048">
    <property type="entry name" value="PNP_UDP_1"/>
    <property type="match status" value="1"/>
</dbReference>
<dbReference type="SUPFAM" id="SSF53167">
    <property type="entry name" value="Purine and uridine phosphorylases"/>
    <property type="match status" value="1"/>
</dbReference>
<feature type="chain" id="PRO_0000359341" description="5'-methylthioadenosine/S-adenosylhomocysteine nucleosidase">
    <location>
        <begin position="1"/>
        <end position="236"/>
    </location>
</feature>
<feature type="active site" description="Proton acceptor" evidence="1">
    <location>
        <position position="12"/>
    </location>
</feature>
<feature type="active site" description="Proton donor" evidence="1">
    <location>
        <position position="198"/>
    </location>
</feature>
<feature type="binding site" evidence="1">
    <location>
        <position position="78"/>
    </location>
    <ligand>
        <name>substrate</name>
    </ligand>
</feature>
<feature type="binding site" evidence="1">
    <location>
        <position position="153"/>
    </location>
    <ligand>
        <name>substrate</name>
    </ligand>
</feature>
<feature type="binding site" evidence="1">
    <location>
        <begin position="174"/>
        <end position="175"/>
    </location>
    <ligand>
        <name>substrate</name>
    </ligand>
</feature>